<name>PEPQ_YERPS</name>
<keyword id="KW-0224">Dipeptidase</keyword>
<keyword id="KW-0378">Hydrolase</keyword>
<keyword id="KW-0464">Manganese</keyword>
<keyword id="KW-0479">Metal-binding</keyword>
<keyword id="KW-0482">Metalloprotease</keyword>
<keyword id="KW-0645">Protease</keyword>
<proteinExistence type="inferred from homology"/>
<evidence type="ECO:0000255" key="1">
    <source>
        <dbReference type="HAMAP-Rule" id="MF_01279"/>
    </source>
</evidence>
<dbReference type="EC" id="3.4.13.9" evidence="1"/>
<dbReference type="EMBL" id="BX936398">
    <property type="protein sequence ID" value="CAH19508.1"/>
    <property type="molecule type" value="Genomic_DNA"/>
</dbReference>
<dbReference type="RefSeq" id="WP_011191548.1">
    <property type="nucleotide sequence ID" value="NC_006155.1"/>
</dbReference>
<dbReference type="SMR" id="Q66FR7"/>
<dbReference type="MEROPS" id="M24.003"/>
<dbReference type="KEGG" id="ypo:BZ17_2315"/>
<dbReference type="KEGG" id="yps:YPTB0268"/>
<dbReference type="PATRIC" id="fig|273123.14.peg.2438"/>
<dbReference type="Proteomes" id="UP000001011">
    <property type="component" value="Chromosome"/>
</dbReference>
<dbReference type="GO" id="GO:0005829">
    <property type="term" value="C:cytosol"/>
    <property type="evidence" value="ECO:0007669"/>
    <property type="project" value="TreeGrafter"/>
</dbReference>
<dbReference type="GO" id="GO:0004177">
    <property type="term" value="F:aminopeptidase activity"/>
    <property type="evidence" value="ECO:0007669"/>
    <property type="project" value="TreeGrafter"/>
</dbReference>
<dbReference type="GO" id="GO:0046872">
    <property type="term" value="F:metal ion binding"/>
    <property type="evidence" value="ECO:0007669"/>
    <property type="project" value="UniProtKB-KW"/>
</dbReference>
<dbReference type="GO" id="GO:0008235">
    <property type="term" value="F:metalloexopeptidase activity"/>
    <property type="evidence" value="ECO:0007669"/>
    <property type="project" value="UniProtKB-UniRule"/>
</dbReference>
<dbReference type="GO" id="GO:0016795">
    <property type="term" value="F:phosphoric triester hydrolase activity"/>
    <property type="evidence" value="ECO:0007669"/>
    <property type="project" value="InterPro"/>
</dbReference>
<dbReference type="GO" id="GO:0102009">
    <property type="term" value="F:proline dipeptidase activity"/>
    <property type="evidence" value="ECO:0007669"/>
    <property type="project" value="UniProtKB-EC"/>
</dbReference>
<dbReference type="GO" id="GO:0006508">
    <property type="term" value="P:proteolysis"/>
    <property type="evidence" value="ECO:0007669"/>
    <property type="project" value="UniProtKB-KW"/>
</dbReference>
<dbReference type="Gene3D" id="3.90.230.10">
    <property type="entry name" value="Creatinase/methionine aminopeptidase superfamily"/>
    <property type="match status" value="1"/>
</dbReference>
<dbReference type="Gene3D" id="3.40.350.10">
    <property type="entry name" value="Creatinase/prolidase N-terminal domain"/>
    <property type="match status" value="1"/>
</dbReference>
<dbReference type="HAMAP" id="MF_01279">
    <property type="entry name" value="X_Pro_dipeptid"/>
    <property type="match status" value="1"/>
</dbReference>
<dbReference type="InterPro" id="IPR029149">
    <property type="entry name" value="Creatin/AminoP/Spt16_N"/>
</dbReference>
<dbReference type="InterPro" id="IPR036005">
    <property type="entry name" value="Creatinase/aminopeptidase-like"/>
</dbReference>
<dbReference type="InterPro" id="IPR048819">
    <property type="entry name" value="PepQ_N"/>
</dbReference>
<dbReference type="InterPro" id="IPR000994">
    <property type="entry name" value="Pept_M24"/>
</dbReference>
<dbReference type="InterPro" id="IPR001131">
    <property type="entry name" value="Peptidase_M24B_aminopep-P_CS"/>
</dbReference>
<dbReference type="InterPro" id="IPR052433">
    <property type="entry name" value="X-Pro_dipept-like"/>
</dbReference>
<dbReference type="InterPro" id="IPR022846">
    <property type="entry name" value="X_Pro_dipept"/>
</dbReference>
<dbReference type="NCBIfam" id="NF010133">
    <property type="entry name" value="PRK13607.1"/>
    <property type="match status" value="1"/>
</dbReference>
<dbReference type="PANTHER" id="PTHR43226">
    <property type="entry name" value="XAA-PRO AMINOPEPTIDASE 3"/>
    <property type="match status" value="1"/>
</dbReference>
<dbReference type="PANTHER" id="PTHR43226:SF8">
    <property type="entry name" value="XAA-PRO DIPEPTIDASE"/>
    <property type="match status" value="1"/>
</dbReference>
<dbReference type="Pfam" id="PF21216">
    <property type="entry name" value="PepQ_N"/>
    <property type="match status" value="1"/>
</dbReference>
<dbReference type="Pfam" id="PF00557">
    <property type="entry name" value="Peptidase_M24"/>
    <property type="match status" value="1"/>
</dbReference>
<dbReference type="SUPFAM" id="SSF55920">
    <property type="entry name" value="Creatinase/aminopeptidase"/>
    <property type="match status" value="1"/>
</dbReference>
<dbReference type="PROSITE" id="PS00491">
    <property type="entry name" value="PROLINE_PEPTIDASE"/>
    <property type="match status" value="1"/>
</dbReference>
<feature type="chain" id="PRO_0000303883" description="Xaa-Pro dipeptidase">
    <location>
        <begin position="1"/>
        <end position="443"/>
    </location>
</feature>
<feature type="binding site" evidence="1">
    <location>
        <position position="246"/>
    </location>
    <ligand>
        <name>Mn(2+)</name>
        <dbReference type="ChEBI" id="CHEBI:29035"/>
        <label>2</label>
    </ligand>
</feature>
<feature type="binding site" evidence="1">
    <location>
        <position position="257"/>
    </location>
    <ligand>
        <name>Mn(2+)</name>
        <dbReference type="ChEBI" id="CHEBI:29035"/>
        <label>1</label>
    </ligand>
</feature>
<feature type="binding site" evidence="1">
    <location>
        <position position="257"/>
    </location>
    <ligand>
        <name>Mn(2+)</name>
        <dbReference type="ChEBI" id="CHEBI:29035"/>
        <label>2</label>
    </ligand>
</feature>
<feature type="binding site" evidence="1">
    <location>
        <position position="339"/>
    </location>
    <ligand>
        <name>Mn(2+)</name>
        <dbReference type="ChEBI" id="CHEBI:29035"/>
        <label>1</label>
    </ligand>
</feature>
<feature type="binding site" evidence="1">
    <location>
        <position position="384"/>
    </location>
    <ligand>
        <name>Mn(2+)</name>
        <dbReference type="ChEBI" id="CHEBI:29035"/>
        <label>1</label>
    </ligand>
</feature>
<feature type="binding site" evidence="1">
    <location>
        <position position="423"/>
    </location>
    <ligand>
        <name>Mn(2+)</name>
        <dbReference type="ChEBI" id="CHEBI:29035"/>
        <label>1</label>
    </ligand>
</feature>
<feature type="binding site" evidence="1">
    <location>
        <position position="423"/>
    </location>
    <ligand>
        <name>Mn(2+)</name>
        <dbReference type="ChEBI" id="CHEBI:29035"/>
        <label>2</label>
    </ligand>
</feature>
<organism>
    <name type="scientific">Yersinia pseudotuberculosis serotype I (strain IP32953)</name>
    <dbReference type="NCBI Taxonomy" id="273123"/>
    <lineage>
        <taxon>Bacteria</taxon>
        <taxon>Pseudomonadati</taxon>
        <taxon>Pseudomonadota</taxon>
        <taxon>Gammaproteobacteria</taxon>
        <taxon>Enterobacterales</taxon>
        <taxon>Yersiniaceae</taxon>
        <taxon>Yersinia</taxon>
    </lineage>
</organism>
<reference key="1">
    <citation type="journal article" date="2004" name="Proc. Natl. Acad. Sci. U.S.A.">
        <title>Insights into the evolution of Yersinia pestis through whole-genome comparison with Yersinia pseudotuberculosis.</title>
        <authorList>
            <person name="Chain P.S.G."/>
            <person name="Carniel E."/>
            <person name="Larimer F.W."/>
            <person name="Lamerdin J."/>
            <person name="Stoutland P.O."/>
            <person name="Regala W.M."/>
            <person name="Georgescu A.M."/>
            <person name="Vergez L.M."/>
            <person name="Land M.L."/>
            <person name="Motin V.L."/>
            <person name="Brubaker R.R."/>
            <person name="Fowler J."/>
            <person name="Hinnebusch J."/>
            <person name="Marceau M."/>
            <person name="Medigue C."/>
            <person name="Simonet M."/>
            <person name="Chenal-Francisque V."/>
            <person name="Souza B."/>
            <person name="Dacheux D."/>
            <person name="Elliott J.M."/>
            <person name="Derbise A."/>
            <person name="Hauser L.J."/>
            <person name="Garcia E."/>
        </authorList>
    </citation>
    <scope>NUCLEOTIDE SEQUENCE [LARGE SCALE GENOMIC DNA]</scope>
    <source>
        <strain>IP32953</strain>
    </source>
</reference>
<sequence>METLASLYNEHLSTLQQRTRDVLERHQLDALLIHSGELQRLFLDDRDYPFKVNPQFKAWVPVTEVPNCWLWVDGVNTPKLWFYSPVDYWHSVEPLPDSFWTKNIDVQPLLNADDIAQQLPVQRERVAYIGYAQQRAQALGFSAENINPQPVLDYLHYYRSYKTDYELACMREAQKTAVVGHRAAYEAFQSGMSEFDINLAYLMATGHRDTDVPYDNIVALNEHSAVLHYTILQHQPPAEIRSFLIDAGAEYNGYAADLTRTYAADRDSDFAALISDLNTEQLALIDTIKSGERYTDYHVQMHQRIAKLLRTHNLVTGISEEAMVEQGITCPFLPHGLGHPLGLQVHDTAGFMQDDKGTNLNAPSKYPYLRCTRVLQPRMVLTIEPGLYFIDSLLAPWRIGEFSKHFNWDRIDALKPYGGIRIEDNIVIHDKRVENMTRDLKLA</sequence>
<protein>
    <recommendedName>
        <fullName evidence="1">Xaa-Pro dipeptidase</fullName>
        <shortName evidence="1">X-Pro dipeptidase</shortName>
        <ecNumber evidence="1">3.4.13.9</ecNumber>
    </recommendedName>
    <alternativeName>
        <fullName evidence="1">Imidodipeptidase</fullName>
    </alternativeName>
    <alternativeName>
        <fullName evidence="1">Proline dipeptidase</fullName>
        <shortName evidence="1">Prolidase</shortName>
    </alternativeName>
</protein>
<comment type="function">
    <text evidence="1">Splits dipeptides with a prolyl residue in the C-terminal position.</text>
</comment>
<comment type="catalytic activity">
    <reaction evidence="1">
        <text>Xaa-L-Pro dipeptide + H2O = an L-alpha-amino acid + L-proline</text>
        <dbReference type="Rhea" id="RHEA:76407"/>
        <dbReference type="ChEBI" id="CHEBI:15377"/>
        <dbReference type="ChEBI" id="CHEBI:59869"/>
        <dbReference type="ChEBI" id="CHEBI:60039"/>
        <dbReference type="ChEBI" id="CHEBI:195196"/>
        <dbReference type="EC" id="3.4.13.9"/>
    </reaction>
</comment>
<comment type="cofactor">
    <cofactor evidence="1">
        <name>Mn(2+)</name>
        <dbReference type="ChEBI" id="CHEBI:29035"/>
    </cofactor>
    <text evidence="1">Binds 2 manganese ions per subunit.</text>
</comment>
<comment type="similarity">
    <text evidence="1">Belongs to the peptidase M24B family. Bacterial-type prolidase subfamily.</text>
</comment>
<gene>
    <name evidence="1" type="primary">pepQ</name>
    <name type="ordered locus">YPTB0268</name>
</gene>
<accession>Q66FR7</accession>